<feature type="chain" id="PRO_0000278916" description="EKC/KEOPS complex subunit BUD32">
    <location>
        <begin position="1"/>
        <end position="263"/>
    </location>
</feature>
<feature type="domain" description="Protein kinase" evidence="3">
    <location>
        <begin position="16"/>
        <end position="263"/>
    </location>
</feature>
<feature type="active site" description="Proton acceptor" evidence="3 4">
    <location>
        <position position="163"/>
    </location>
</feature>
<feature type="binding site" evidence="3">
    <location>
        <begin position="22"/>
        <end position="30"/>
    </location>
    <ligand>
        <name>ATP</name>
        <dbReference type="ChEBI" id="CHEBI:30616"/>
    </ligand>
</feature>
<feature type="binding site" evidence="3">
    <location>
        <position position="54"/>
    </location>
    <ligand>
        <name>ATP</name>
        <dbReference type="ChEBI" id="CHEBI:30616"/>
    </ligand>
</feature>
<reference key="1">
    <citation type="journal article" date="2004" name="Nature">
        <title>Genome evolution in yeasts.</title>
        <authorList>
            <person name="Dujon B."/>
            <person name="Sherman D."/>
            <person name="Fischer G."/>
            <person name="Durrens P."/>
            <person name="Casaregola S."/>
            <person name="Lafontaine I."/>
            <person name="de Montigny J."/>
            <person name="Marck C."/>
            <person name="Neuveglise C."/>
            <person name="Talla E."/>
            <person name="Goffard N."/>
            <person name="Frangeul L."/>
            <person name="Aigle M."/>
            <person name="Anthouard V."/>
            <person name="Babour A."/>
            <person name="Barbe V."/>
            <person name="Barnay S."/>
            <person name="Blanchin S."/>
            <person name="Beckerich J.-M."/>
            <person name="Beyne E."/>
            <person name="Bleykasten C."/>
            <person name="Boisrame A."/>
            <person name="Boyer J."/>
            <person name="Cattolico L."/>
            <person name="Confanioleri F."/>
            <person name="de Daruvar A."/>
            <person name="Despons L."/>
            <person name="Fabre E."/>
            <person name="Fairhead C."/>
            <person name="Ferry-Dumazet H."/>
            <person name="Groppi A."/>
            <person name="Hantraye F."/>
            <person name="Hennequin C."/>
            <person name="Jauniaux N."/>
            <person name="Joyet P."/>
            <person name="Kachouri R."/>
            <person name="Kerrest A."/>
            <person name="Koszul R."/>
            <person name="Lemaire M."/>
            <person name="Lesur I."/>
            <person name="Ma L."/>
            <person name="Muller H."/>
            <person name="Nicaud J.-M."/>
            <person name="Nikolski M."/>
            <person name="Oztas S."/>
            <person name="Ozier-Kalogeropoulos O."/>
            <person name="Pellenz S."/>
            <person name="Potier S."/>
            <person name="Richard G.-F."/>
            <person name="Straub M.-L."/>
            <person name="Suleau A."/>
            <person name="Swennen D."/>
            <person name="Tekaia F."/>
            <person name="Wesolowski-Louvel M."/>
            <person name="Westhof E."/>
            <person name="Wirth B."/>
            <person name="Zeniou-Meyer M."/>
            <person name="Zivanovic Y."/>
            <person name="Bolotin-Fukuhara M."/>
            <person name="Thierry A."/>
            <person name="Bouchier C."/>
            <person name="Caudron B."/>
            <person name="Scarpelli C."/>
            <person name="Gaillardin C."/>
            <person name="Weissenbach J."/>
            <person name="Wincker P."/>
            <person name="Souciet J.-L."/>
        </authorList>
    </citation>
    <scope>NUCLEOTIDE SEQUENCE [LARGE SCALE GENOMIC DNA]</scope>
    <source>
        <strain>ATCC 8585 / CBS 2359 / DSM 70799 / NBRC 1267 / NRRL Y-1140 / WM37</strain>
    </source>
</reference>
<dbReference type="EC" id="3.6.-.-" evidence="2"/>
<dbReference type="EC" id="2.7.11.1" evidence="1"/>
<dbReference type="EMBL" id="CR382121">
    <property type="protein sequence ID" value="CAH03008.1"/>
    <property type="molecule type" value="Genomic_DNA"/>
</dbReference>
<dbReference type="RefSeq" id="XP_451420.1">
    <property type="nucleotide sequence ID" value="XM_451420.1"/>
</dbReference>
<dbReference type="SMR" id="Q6CXB9"/>
<dbReference type="FunCoup" id="Q6CXB9">
    <property type="interactions" value="920"/>
</dbReference>
<dbReference type="STRING" id="284590.Q6CXB9"/>
<dbReference type="PaxDb" id="284590-Q6CXB9"/>
<dbReference type="KEGG" id="kla:KLLA0_A09625g"/>
<dbReference type="eggNOG" id="KOG3087">
    <property type="taxonomic scope" value="Eukaryota"/>
</dbReference>
<dbReference type="HOGENOM" id="CLU_063953_1_1_1"/>
<dbReference type="InParanoid" id="Q6CXB9"/>
<dbReference type="OMA" id="HKLYMEY"/>
<dbReference type="Proteomes" id="UP000000598">
    <property type="component" value="Chromosome A"/>
</dbReference>
<dbReference type="GO" id="GO:0000781">
    <property type="term" value="C:chromosome, telomeric region"/>
    <property type="evidence" value="ECO:0007669"/>
    <property type="project" value="UniProtKB-SubCell"/>
</dbReference>
<dbReference type="GO" id="GO:0005829">
    <property type="term" value="C:cytosol"/>
    <property type="evidence" value="ECO:0007669"/>
    <property type="project" value="TreeGrafter"/>
</dbReference>
<dbReference type="GO" id="GO:0000408">
    <property type="term" value="C:EKC/KEOPS complex"/>
    <property type="evidence" value="ECO:0007669"/>
    <property type="project" value="TreeGrafter"/>
</dbReference>
<dbReference type="GO" id="GO:0005634">
    <property type="term" value="C:nucleus"/>
    <property type="evidence" value="ECO:0007669"/>
    <property type="project" value="UniProtKB-SubCell"/>
</dbReference>
<dbReference type="GO" id="GO:0005524">
    <property type="term" value="F:ATP binding"/>
    <property type="evidence" value="ECO:0007669"/>
    <property type="project" value="UniProtKB-KW"/>
</dbReference>
<dbReference type="GO" id="GO:0016787">
    <property type="term" value="F:hydrolase activity"/>
    <property type="evidence" value="ECO:0007669"/>
    <property type="project" value="UniProtKB-KW"/>
</dbReference>
<dbReference type="GO" id="GO:0106310">
    <property type="term" value="F:protein serine kinase activity"/>
    <property type="evidence" value="ECO:0007669"/>
    <property type="project" value="RHEA"/>
</dbReference>
<dbReference type="GO" id="GO:0004674">
    <property type="term" value="F:protein serine/threonine kinase activity"/>
    <property type="evidence" value="ECO:0007669"/>
    <property type="project" value="UniProtKB-KW"/>
</dbReference>
<dbReference type="GO" id="GO:0008033">
    <property type="term" value="P:tRNA processing"/>
    <property type="evidence" value="ECO:0007669"/>
    <property type="project" value="UniProtKB-KW"/>
</dbReference>
<dbReference type="GO" id="GO:0070525">
    <property type="term" value="P:tRNA threonylcarbamoyladenosine metabolic process"/>
    <property type="evidence" value="ECO:0007669"/>
    <property type="project" value="TreeGrafter"/>
</dbReference>
<dbReference type="FunFam" id="1.10.510.10:FF:000745">
    <property type="entry name" value="Serine/threonine-protein kinase BUD32"/>
    <property type="match status" value="1"/>
</dbReference>
<dbReference type="Gene3D" id="3.30.200.20">
    <property type="entry name" value="Phosphorylase Kinase, domain 1"/>
    <property type="match status" value="1"/>
</dbReference>
<dbReference type="Gene3D" id="1.10.510.10">
    <property type="entry name" value="Transferase(Phosphotransferase) domain 1"/>
    <property type="match status" value="1"/>
</dbReference>
<dbReference type="InterPro" id="IPR011009">
    <property type="entry name" value="Kinase-like_dom_sf"/>
</dbReference>
<dbReference type="InterPro" id="IPR000719">
    <property type="entry name" value="Prot_kinase_dom"/>
</dbReference>
<dbReference type="InterPro" id="IPR008266">
    <property type="entry name" value="Tyr_kinase_AS"/>
</dbReference>
<dbReference type="PANTHER" id="PTHR12209:SF0">
    <property type="entry name" value="EKC_KEOPS COMPLEX SUBUNIT TP53RK"/>
    <property type="match status" value="1"/>
</dbReference>
<dbReference type="PANTHER" id="PTHR12209">
    <property type="entry name" value="NON-SPECIFIC SERINE/THREONINE PROTEIN KINASE"/>
    <property type="match status" value="1"/>
</dbReference>
<dbReference type="Pfam" id="PF06293">
    <property type="entry name" value="Kdo"/>
    <property type="match status" value="1"/>
</dbReference>
<dbReference type="SUPFAM" id="SSF56112">
    <property type="entry name" value="Protein kinase-like (PK-like)"/>
    <property type="match status" value="1"/>
</dbReference>
<dbReference type="PROSITE" id="PS50011">
    <property type="entry name" value="PROTEIN_KINASE_DOM"/>
    <property type="match status" value="1"/>
</dbReference>
<dbReference type="PROSITE" id="PS00109">
    <property type="entry name" value="PROTEIN_KINASE_TYR"/>
    <property type="match status" value="1"/>
</dbReference>
<keyword id="KW-0010">Activator</keyword>
<keyword id="KW-0067">ATP-binding</keyword>
<keyword id="KW-0158">Chromosome</keyword>
<keyword id="KW-0963">Cytoplasm</keyword>
<keyword id="KW-0378">Hydrolase</keyword>
<keyword id="KW-0418">Kinase</keyword>
<keyword id="KW-0547">Nucleotide-binding</keyword>
<keyword id="KW-0539">Nucleus</keyword>
<keyword id="KW-0597">Phosphoprotein</keyword>
<keyword id="KW-1185">Reference proteome</keyword>
<keyword id="KW-0723">Serine/threonine-protein kinase</keyword>
<keyword id="KW-0779">Telomere</keyword>
<keyword id="KW-0804">Transcription</keyword>
<keyword id="KW-0805">Transcription regulation</keyword>
<keyword id="KW-0808">Transferase</keyword>
<keyword id="KW-0819">tRNA processing</keyword>
<proteinExistence type="inferred from homology"/>
<accession>Q6CXB9</accession>
<protein>
    <recommendedName>
        <fullName>EKC/KEOPS complex subunit BUD32</fullName>
        <ecNumber evidence="2">3.6.-.-</ecNumber>
    </recommendedName>
    <alternativeName>
        <fullName>Atypical serine/threonine protein kinase BUD32</fullName>
        <ecNumber evidence="1">2.7.11.1</ecNumber>
    </alternativeName>
</protein>
<name>BUD32_KLULA</name>
<evidence type="ECO:0000250" key="1">
    <source>
        <dbReference type="UniProtKB" id="P53323"/>
    </source>
</evidence>
<evidence type="ECO:0000250" key="2">
    <source>
        <dbReference type="UniProtKB" id="Q9UYB9"/>
    </source>
</evidence>
<evidence type="ECO:0000255" key="3">
    <source>
        <dbReference type="PROSITE-ProRule" id="PRU00159"/>
    </source>
</evidence>
<evidence type="ECO:0000255" key="4">
    <source>
        <dbReference type="PROSITE-ProRule" id="PRU10028"/>
    </source>
</evidence>
<evidence type="ECO:0000305" key="5"/>
<organism>
    <name type="scientific">Kluyveromyces lactis (strain ATCC 8585 / CBS 2359 / DSM 70799 / NBRC 1267 / NRRL Y-1140 / WM37)</name>
    <name type="common">Yeast</name>
    <name type="synonym">Candida sphaerica</name>
    <dbReference type="NCBI Taxonomy" id="284590"/>
    <lineage>
        <taxon>Eukaryota</taxon>
        <taxon>Fungi</taxon>
        <taxon>Dikarya</taxon>
        <taxon>Ascomycota</taxon>
        <taxon>Saccharomycotina</taxon>
        <taxon>Saccharomycetes</taxon>
        <taxon>Saccharomycetales</taxon>
        <taxon>Saccharomycetaceae</taxon>
        <taxon>Kluyveromyces</taxon>
    </lineage>
</organism>
<comment type="function">
    <text evidence="1">Component of the EKC/KEOPS complex that is required for the formation of a threonylcarbamoyl group on adenosine at position 37 (t(6)A37) in tRNAs that read codons beginning with adenine. The complex is probably involved in the transfer of the threonylcarbamoyl moiety of threonylcarbamoyl-AMP (TC-AMP) to the N6 group of A37. BUD32 has ATPase activity in the context of the EKC/KEOPS complex and likely plays a supporting role to the catalytic subunit KAE1. The EKC/KEOPS complex also promotes both telomere uncapping and telomere elongation. The complex is required for efficient recruitment of transcriptional coactivators.</text>
</comment>
<comment type="catalytic activity">
    <reaction evidence="1">
        <text>L-seryl-[protein] + ATP = O-phospho-L-seryl-[protein] + ADP + H(+)</text>
        <dbReference type="Rhea" id="RHEA:17989"/>
        <dbReference type="Rhea" id="RHEA-COMP:9863"/>
        <dbReference type="Rhea" id="RHEA-COMP:11604"/>
        <dbReference type="ChEBI" id="CHEBI:15378"/>
        <dbReference type="ChEBI" id="CHEBI:29999"/>
        <dbReference type="ChEBI" id="CHEBI:30616"/>
        <dbReference type="ChEBI" id="CHEBI:83421"/>
        <dbReference type="ChEBI" id="CHEBI:456216"/>
        <dbReference type="EC" id="2.7.11.1"/>
    </reaction>
</comment>
<comment type="catalytic activity">
    <reaction evidence="1">
        <text>L-threonyl-[protein] + ATP = O-phospho-L-threonyl-[protein] + ADP + H(+)</text>
        <dbReference type="Rhea" id="RHEA:46608"/>
        <dbReference type="Rhea" id="RHEA-COMP:11060"/>
        <dbReference type="Rhea" id="RHEA-COMP:11605"/>
        <dbReference type="ChEBI" id="CHEBI:15378"/>
        <dbReference type="ChEBI" id="CHEBI:30013"/>
        <dbReference type="ChEBI" id="CHEBI:30616"/>
        <dbReference type="ChEBI" id="CHEBI:61977"/>
        <dbReference type="ChEBI" id="CHEBI:456216"/>
        <dbReference type="EC" id="2.7.11.1"/>
    </reaction>
</comment>
<comment type="subunit">
    <text evidence="1">Component of the EKC/KEOPS complex composed of at least BUD32, CGI121, GON7, KAE1 and PCC1; the whole complex dimerizes.</text>
</comment>
<comment type="subcellular location">
    <subcellularLocation>
        <location evidence="1">Cytoplasm</location>
    </subcellularLocation>
    <subcellularLocation>
        <location evidence="1">Nucleus</location>
    </subcellularLocation>
    <subcellularLocation>
        <location evidence="1">Chromosome</location>
        <location evidence="1">Telomere</location>
    </subcellularLocation>
</comment>
<comment type="domain">
    <text evidence="1 2">This protein is considered an atypical serine/threonine kinase, because it lacks the conventional structural elements necessary for the substrate recognition as well as a lysine residue that in all other serine/threonine kinases participates in the catalytic event (By similarity). BUD32 has protein kinase activity in vitro, but in the context of the EKC/KEOPS complex, the catalytic subunit KAE1 switches the activity of BUD32 from kinase into ATPase (By similarity).</text>
</comment>
<comment type="similarity">
    <text evidence="5">Belongs to the protein kinase superfamily. BUD32 family.</text>
</comment>
<sequence>MSAEIIASIADVLTDNIPLTPISQGAEAVVFTSPVHPYLPKNRTDGDDKLYILKYRPEKKYRHPVIDKTLTKHRTLGESRLLAKLRLIDGLNVPKLIGCDPYHGCIWLEFLGEDLPNGHGFSNLKNFLWMNASDPYSDLVRDTMINVGKQIGLMHWNDYCHGDLTTSNIVLVRAGEDWQPYLIDFGLGSISTLVEDKGVDLYVLERAIISTHSSFANRYNLWVLEGFKSVFESHGKAGLGKYKDLIRRFEEVRLRGRKRSMIG</sequence>
<gene>
    <name type="primary">BUD32</name>
    <name type="ordered locus">KLLA0A09625g</name>
</gene>